<name>UPPP_MYCBT</name>
<evidence type="ECO:0000255" key="1">
    <source>
        <dbReference type="HAMAP-Rule" id="MF_01006"/>
    </source>
</evidence>
<accession>C1AQ52</accession>
<protein>
    <recommendedName>
        <fullName evidence="1">Undecaprenyl-diphosphatase</fullName>
        <ecNumber evidence="1">3.6.1.27</ecNumber>
    </recommendedName>
    <alternativeName>
        <fullName evidence="1">Bacitracin resistance protein</fullName>
    </alternativeName>
    <alternativeName>
        <fullName evidence="1">Undecaprenyl pyrophosphate phosphatase</fullName>
    </alternativeName>
</protein>
<proteinExistence type="inferred from homology"/>
<comment type="function">
    <text evidence="1">Catalyzes the dephosphorylation of undecaprenyl diphosphate (UPP). Confers resistance to bacitracin.</text>
</comment>
<comment type="catalytic activity">
    <reaction evidence="1">
        <text>di-trans,octa-cis-undecaprenyl diphosphate + H2O = di-trans,octa-cis-undecaprenyl phosphate + phosphate + H(+)</text>
        <dbReference type="Rhea" id="RHEA:28094"/>
        <dbReference type="ChEBI" id="CHEBI:15377"/>
        <dbReference type="ChEBI" id="CHEBI:15378"/>
        <dbReference type="ChEBI" id="CHEBI:43474"/>
        <dbReference type="ChEBI" id="CHEBI:58405"/>
        <dbReference type="ChEBI" id="CHEBI:60392"/>
        <dbReference type="EC" id="3.6.1.27"/>
    </reaction>
</comment>
<comment type="subcellular location">
    <subcellularLocation>
        <location evidence="1">Cell membrane</location>
        <topology evidence="1">Multi-pass membrane protein</topology>
    </subcellularLocation>
</comment>
<comment type="miscellaneous">
    <text>Bacitracin is thought to be involved in the inhibition of peptidoglycan synthesis by sequestering undecaprenyl diphosphate, thereby reducing the pool of lipid carrier available.</text>
</comment>
<comment type="similarity">
    <text evidence="1">Belongs to the UppP family.</text>
</comment>
<sequence length="276" mass="29733">MSWWQVIVLAAAQGLTEFLPVSSSGHLAIVSRIFFSGDAGASFTAVSQLGTEAAVVIYFARDIVRILSAWLHGLVVKAHRNTDYRLGWYVIIGTIPICILGLFFKDDIRSGVRNLWVVVTALVVFSGVIALAEYVGRQSRHIERLTWRDAVVVGIAQTLALVPGVSRSGSTISAGLFLGLDRELAARFGFLLAIPAVFASGLFSLPDAFHPVTEGMSATGPQLLVATLIAFVLGLTAVAWLLRFLVRHNMYWFVGYRVLVGTGMLVLLATGTVAAT</sequence>
<reference key="1">
    <citation type="journal article" date="2009" name="Vaccine">
        <title>Whole genome sequence analysis of Mycobacterium bovis bacillus Calmette-Guerin (BCG) Tokyo 172: a comparative study of BCG vaccine substrains.</title>
        <authorList>
            <person name="Seki M."/>
            <person name="Honda I."/>
            <person name="Fujita I."/>
            <person name="Yano I."/>
            <person name="Yamamoto S."/>
            <person name="Koyama A."/>
        </authorList>
    </citation>
    <scope>NUCLEOTIDE SEQUENCE [LARGE SCALE GENOMIC DNA]</scope>
    <source>
        <strain>BCG / Tokyo 172 / ATCC 35737 / TMC 1019</strain>
    </source>
</reference>
<feature type="chain" id="PRO_1000148819" description="Undecaprenyl-diphosphatase">
    <location>
        <begin position="1"/>
        <end position="276"/>
    </location>
</feature>
<feature type="transmembrane region" description="Helical" evidence="1">
    <location>
        <begin position="84"/>
        <end position="104"/>
    </location>
</feature>
<feature type="transmembrane region" description="Helical" evidence="1">
    <location>
        <begin position="115"/>
        <end position="135"/>
    </location>
</feature>
<feature type="transmembrane region" description="Helical" evidence="1">
    <location>
        <begin position="188"/>
        <end position="208"/>
    </location>
</feature>
<feature type="transmembrane region" description="Helical" evidence="1">
    <location>
        <begin position="222"/>
        <end position="242"/>
    </location>
</feature>
<feature type="transmembrane region" description="Helical" evidence="1">
    <location>
        <begin position="250"/>
        <end position="270"/>
    </location>
</feature>
<dbReference type="EC" id="3.6.1.27" evidence="1"/>
<dbReference type="EMBL" id="AP010918">
    <property type="protein sequence ID" value="BAH26431.1"/>
    <property type="molecule type" value="Genomic_DNA"/>
</dbReference>
<dbReference type="RefSeq" id="WP_003411105.1">
    <property type="nucleotide sequence ID" value="NZ_CP014566.1"/>
</dbReference>
<dbReference type="SMR" id="C1AQ52"/>
<dbReference type="KEGG" id="mbt:JTY_2147"/>
<dbReference type="HOGENOM" id="CLU_060296_1_0_11"/>
<dbReference type="GO" id="GO:0005886">
    <property type="term" value="C:plasma membrane"/>
    <property type="evidence" value="ECO:0007669"/>
    <property type="project" value="UniProtKB-SubCell"/>
</dbReference>
<dbReference type="GO" id="GO:0050380">
    <property type="term" value="F:undecaprenyl-diphosphatase activity"/>
    <property type="evidence" value="ECO:0007669"/>
    <property type="project" value="UniProtKB-UniRule"/>
</dbReference>
<dbReference type="GO" id="GO:0071555">
    <property type="term" value="P:cell wall organization"/>
    <property type="evidence" value="ECO:0007669"/>
    <property type="project" value="UniProtKB-KW"/>
</dbReference>
<dbReference type="GO" id="GO:0009252">
    <property type="term" value="P:peptidoglycan biosynthetic process"/>
    <property type="evidence" value="ECO:0007669"/>
    <property type="project" value="UniProtKB-KW"/>
</dbReference>
<dbReference type="GO" id="GO:0008360">
    <property type="term" value="P:regulation of cell shape"/>
    <property type="evidence" value="ECO:0007669"/>
    <property type="project" value="UniProtKB-KW"/>
</dbReference>
<dbReference type="GO" id="GO:0046677">
    <property type="term" value="P:response to antibiotic"/>
    <property type="evidence" value="ECO:0007669"/>
    <property type="project" value="UniProtKB-UniRule"/>
</dbReference>
<dbReference type="HAMAP" id="MF_01006">
    <property type="entry name" value="Undec_diphosphatase"/>
    <property type="match status" value="1"/>
</dbReference>
<dbReference type="InterPro" id="IPR003824">
    <property type="entry name" value="UppP"/>
</dbReference>
<dbReference type="NCBIfam" id="NF001392">
    <property type="entry name" value="PRK00281.2-1"/>
    <property type="match status" value="1"/>
</dbReference>
<dbReference type="NCBIfam" id="TIGR00753">
    <property type="entry name" value="undec_PP_bacA"/>
    <property type="match status" value="1"/>
</dbReference>
<dbReference type="PANTHER" id="PTHR30622">
    <property type="entry name" value="UNDECAPRENYL-DIPHOSPHATASE"/>
    <property type="match status" value="1"/>
</dbReference>
<dbReference type="PANTHER" id="PTHR30622:SF4">
    <property type="entry name" value="UNDECAPRENYL-DIPHOSPHATASE"/>
    <property type="match status" value="1"/>
</dbReference>
<dbReference type="Pfam" id="PF02673">
    <property type="entry name" value="BacA"/>
    <property type="match status" value="1"/>
</dbReference>
<organism>
    <name type="scientific">Mycobacterium bovis (strain BCG / Tokyo 172 / ATCC 35737 / TMC 1019)</name>
    <dbReference type="NCBI Taxonomy" id="561275"/>
    <lineage>
        <taxon>Bacteria</taxon>
        <taxon>Bacillati</taxon>
        <taxon>Actinomycetota</taxon>
        <taxon>Actinomycetes</taxon>
        <taxon>Mycobacteriales</taxon>
        <taxon>Mycobacteriaceae</taxon>
        <taxon>Mycobacterium</taxon>
        <taxon>Mycobacterium tuberculosis complex</taxon>
    </lineage>
</organism>
<keyword id="KW-0046">Antibiotic resistance</keyword>
<keyword id="KW-1003">Cell membrane</keyword>
<keyword id="KW-0133">Cell shape</keyword>
<keyword id="KW-0961">Cell wall biogenesis/degradation</keyword>
<keyword id="KW-0378">Hydrolase</keyword>
<keyword id="KW-0472">Membrane</keyword>
<keyword id="KW-0573">Peptidoglycan synthesis</keyword>
<keyword id="KW-0812">Transmembrane</keyword>
<keyword id="KW-1133">Transmembrane helix</keyword>
<gene>
    <name evidence="1" type="primary">uppP</name>
    <name type="ordered locus">JTY_2147</name>
</gene>